<name>LEU3_GEOKA</name>
<feature type="chain" id="PRO_0000083694" description="3-isopropylmalate dehydrogenase">
    <location>
        <begin position="1"/>
        <end position="371"/>
    </location>
</feature>
<feature type="binding site" evidence="1">
    <location>
        <begin position="77"/>
        <end position="90"/>
    </location>
    <ligand>
        <name>NAD(+)</name>
        <dbReference type="ChEBI" id="CHEBI:57540"/>
    </ligand>
</feature>
<feature type="binding site" evidence="1">
    <location>
        <position position="97"/>
    </location>
    <ligand>
        <name>substrate</name>
    </ligand>
</feature>
<feature type="binding site" evidence="1">
    <location>
        <position position="107"/>
    </location>
    <ligand>
        <name>substrate</name>
    </ligand>
</feature>
<feature type="binding site" evidence="1">
    <location>
        <position position="135"/>
    </location>
    <ligand>
        <name>substrate</name>
    </ligand>
</feature>
<feature type="binding site" evidence="1">
    <location>
        <position position="224"/>
    </location>
    <ligand>
        <name>Mg(2+)</name>
        <dbReference type="ChEBI" id="CHEBI:18420"/>
    </ligand>
</feature>
<feature type="binding site" evidence="1">
    <location>
        <position position="224"/>
    </location>
    <ligand>
        <name>substrate</name>
    </ligand>
</feature>
<feature type="binding site" evidence="1">
    <location>
        <position position="248"/>
    </location>
    <ligand>
        <name>Mg(2+)</name>
        <dbReference type="ChEBI" id="CHEBI:18420"/>
    </ligand>
</feature>
<feature type="binding site" evidence="1">
    <location>
        <position position="252"/>
    </location>
    <ligand>
        <name>Mg(2+)</name>
        <dbReference type="ChEBI" id="CHEBI:18420"/>
    </ligand>
</feature>
<feature type="binding site" evidence="1">
    <location>
        <begin position="282"/>
        <end position="294"/>
    </location>
    <ligand>
        <name>NAD(+)</name>
        <dbReference type="ChEBI" id="CHEBI:57540"/>
    </ligand>
</feature>
<feature type="site" description="Important for catalysis" evidence="1">
    <location>
        <position position="142"/>
    </location>
</feature>
<feature type="site" description="Important for catalysis" evidence="1">
    <location>
        <position position="192"/>
    </location>
</feature>
<proteinExistence type="inferred from homology"/>
<keyword id="KW-0028">Amino-acid biosynthesis</keyword>
<keyword id="KW-0100">Branched-chain amino acid biosynthesis</keyword>
<keyword id="KW-0963">Cytoplasm</keyword>
<keyword id="KW-0432">Leucine biosynthesis</keyword>
<keyword id="KW-0460">Magnesium</keyword>
<keyword id="KW-0464">Manganese</keyword>
<keyword id="KW-0479">Metal-binding</keyword>
<keyword id="KW-0520">NAD</keyword>
<keyword id="KW-0560">Oxidoreductase</keyword>
<keyword id="KW-1185">Reference proteome</keyword>
<gene>
    <name evidence="1" type="primary">leuB</name>
    <name type="ordered locus">GK2657</name>
</gene>
<sequence>MGNYRIAVLPGDGIGKEVTSGAVEVLKAVGIRFGHEFTFEYGLIGGAAIDEAGTPLPEETLRLCRESDAVLLGAVGGPKWDDNPPHLRPEKGLLAIRKQLDLYANLRPVVCYDSLVSASPLKPDLVQGVDFVIVRELTGGIYFGQPSGRVVENGEEKAVDTLLYKKEEIERIVRMAFILARGRKKKVTSVDKANVLSSSRLWREVAEEVAKQFPDVTLEHMLVDNAAMQLIRAPKQFDVIVTENMFGDILSDEASMLSGSLGMLPSASLSASGPSLYEPVHGSAPDIAGMNKANPIAAILSAAMMLRLSFGLTAEAEAVEHAVRQALDQGLRTADLAPSGGRIVSTNEMVEEIKTAVLDYTAIAQIMTVYA</sequence>
<protein>
    <recommendedName>
        <fullName evidence="1">3-isopropylmalate dehydrogenase</fullName>
        <ecNumber evidence="1">1.1.1.85</ecNumber>
    </recommendedName>
    <alternativeName>
        <fullName evidence="1">3-IPM-DH</fullName>
    </alternativeName>
    <alternativeName>
        <fullName evidence="1">Beta-IPM dehydrogenase</fullName>
        <shortName evidence="1">IMDH</shortName>
    </alternativeName>
</protein>
<evidence type="ECO:0000255" key="1">
    <source>
        <dbReference type="HAMAP-Rule" id="MF_01033"/>
    </source>
</evidence>
<dbReference type="EC" id="1.1.1.85" evidence="1"/>
<dbReference type="EMBL" id="BA000043">
    <property type="protein sequence ID" value="BAD76942.1"/>
    <property type="molecule type" value="Genomic_DNA"/>
</dbReference>
<dbReference type="RefSeq" id="WP_011232133.1">
    <property type="nucleotide sequence ID" value="NC_006510.1"/>
</dbReference>
<dbReference type="SMR" id="Q5KWJ4"/>
<dbReference type="STRING" id="235909.GK2657"/>
<dbReference type="KEGG" id="gka:GK2657"/>
<dbReference type="eggNOG" id="COG0473">
    <property type="taxonomic scope" value="Bacteria"/>
</dbReference>
<dbReference type="HOGENOM" id="CLU_031953_0_3_9"/>
<dbReference type="UniPathway" id="UPA00048">
    <property type="reaction ID" value="UER00072"/>
</dbReference>
<dbReference type="Proteomes" id="UP000001172">
    <property type="component" value="Chromosome"/>
</dbReference>
<dbReference type="GO" id="GO:0005829">
    <property type="term" value="C:cytosol"/>
    <property type="evidence" value="ECO:0007669"/>
    <property type="project" value="TreeGrafter"/>
</dbReference>
<dbReference type="GO" id="GO:0003862">
    <property type="term" value="F:3-isopropylmalate dehydrogenase activity"/>
    <property type="evidence" value="ECO:0007669"/>
    <property type="project" value="UniProtKB-UniRule"/>
</dbReference>
<dbReference type="GO" id="GO:0000287">
    <property type="term" value="F:magnesium ion binding"/>
    <property type="evidence" value="ECO:0007669"/>
    <property type="project" value="InterPro"/>
</dbReference>
<dbReference type="GO" id="GO:0051287">
    <property type="term" value="F:NAD binding"/>
    <property type="evidence" value="ECO:0007669"/>
    <property type="project" value="InterPro"/>
</dbReference>
<dbReference type="GO" id="GO:0009098">
    <property type="term" value="P:L-leucine biosynthetic process"/>
    <property type="evidence" value="ECO:0007669"/>
    <property type="project" value="UniProtKB-UniRule"/>
</dbReference>
<dbReference type="FunFam" id="3.40.718.10:FF:000028">
    <property type="entry name" value="3-isopropylmalate dehydrogenase"/>
    <property type="match status" value="1"/>
</dbReference>
<dbReference type="Gene3D" id="3.40.718.10">
    <property type="entry name" value="Isopropylmalate Dehydrogenase"/>
    <property type="match status" value="1"/>
</dbReference>
<dbReference type="HAMAP" id="MF_01033">
    <property type="entry name" value="LeuB_type1"/>
    <property type="match status" value="1"/>
</dbReference>
<dbReference type="InterPro" id="IPR019818">
    <property type="entry name" value="IsoCit/isopropylmalate_DH_CS"/>
</dbReference>
<dbReference type="InterPro" id="IPR024084">
    <property type="entry name" value="IsoPropMal-DH-like_dom"/>
</dbReference>
<dbReference type="InterPro" id="IPR004429">
    <property type="entry name" value="Isopropylmalate_DH"/>
</dbReference>
<dbReference type="NCBIfam" id="TIGR00169">
    <property type="entry name" value="leuB"/>
    <property type="match status" value="1"/>
</dbReference>
<dbReference type="PANTHER" id="PTHR42979">
    <property type="entry name" value="3-ISOPROPYLMALATE DEHYDROGENASE"/>
    <property type="match status" value="1"/>
</dbReference>
<dbReference type="PANTHER" id="PTHR42979:SF1">
    <property type="entry name" value="3-ISOPROPYLMALATE DEHYDROGENASE"/>
    <property type="match status" value="1"/>
</dbReference>
<dbReference type="Pfam" id="PF00180">
    <property type="entry name" value="Iso_dh"/>
    <property type="match status" value="1"/>
</dbReference>
<dbReference type="SMART" id="SM01329">
    <property type="entry name" value="Iso_dh"/>
    <property type="match status" value="1"/>
</dbReference>
<dbReference type="SUPFAM" id="SSF53659">
    <property type="entry name" value="Isocitrate/Isopropylmalate dehydrogenase-like"/>
    <property type="match status" value="1"/>
</dbReference>
<dbReference type="PROSITE" id="PS00470">
    <property type="entry name" value="IDH_IMDH"/>
    <property type="match status" value="1"/>
</dbReference>
<comment type="function">
    <text evidence="1">Catalyzes the oxidation of 3-carboxy-2-hydroxy-4-methylpentanoate (3-isopropylmalate) to 3-carboxy-4-methyl-2-oxopentanoate. The product decarboxylates to 4-methyl-2 oxopentanoate.</text>
</comment>
<comment type="catalytic activity">
    <reaction evidence="1">
        <text>(2R,3S)-3-isopropylmalate + NAD(+) = 4-methyl-2-oxopentanoate + CO2 + NADH</text>
        <dbReference type="Rhea" id="RHEA:32271"/>
        <dbReference type="ChEBI" id="CHEBI:16526"/>
        <dbReference type="ChEBI" id="CHEBI:17865"/>
        <dbReference type="ChEBI" id="CHEBI:35121"/>
        <dbReference type="ChEBI" id="CHEBI:57540"/>
        <dbReference type="ChEBI" id="CHEBI:57945"/>
        <dbReference type="EC" id="1.1.1.85"/>
    </reaction>
</comment>
<comment type="cofactor">
    <cofactor evidence="1">
        <name>Mg(2+)</name>
        <dbReference type="ChEBI" id="CHEBI:18420"/>
    </cofactor>
    <cofactor evidence="1">
        <name>Mn(2+)</name>
        <dbReference type="ChEBI" id="CHEBI:29035"/>
    </cofactor>
    <text evidence="1">Binds 1 Mg(2+) or Mn(2+) ion per subunit.</text>
</comment>
<comment type="pathway">
    <text evidence="1">Amino-acid biosynthesis; L-leucine biosynthesis; L-leucine from 3-methyl-2-oxobutanoate: step 3/4.</text>
</comment>
<comment type="subunit">
    <text evidence="1">Homodimer.</text>
</comment>
<comment type="subcellular location">
    <subcellularLocation>
        <location evidence="1">Cytoplasm</location>
    </subcellularLocation>
</comment>
<comment type="similarity">
    <text evidence="1">Belongs to the isocitrate and isopropylmalate dehydrogenases family. LeuB type 1 subfamily.</text>
</comment>
<accession>Q5KWJ4</accession>
<reference key="1">
    <citation type="journal article" date="2004" name="Nucleic Acids Res.">
        <title>Thermoadaptation trait revealed by the genome sequence of thermophilic Geobacillus kaustophilus.</title>
        <authorList>
            <person name="Takami H."/>
            <person name="Takaki Y."/>
            <person name="Chee G.-J."/>
            <person name="Nishi S."/>
            <person name="Shimamura S."/>
            <person name="Suzuki H."/>
            <person name="Matsui S."/>
            <person name="Uchiyama I."/>
        </authorList>
    </citation>
    <scope>NUCLEOTIDE SEQUENCE [LARGE SCALE GENOMIC DNA]</scope>
    <source>
        <strain>HTA426</strain>
    </source>
</reference>
<organism>
    <name type="scientific">Geobacillus kaustophilus (strain HTA426)</name>
    <dbReference type="NCBI Taxonomy" id="235909"/>
    <lineage>
        <taxon>Bacteria</taxon>
        <taxon>Bacillati</taxon>
        <taxon>Bacillota</taxon>
        <taxon>Bacilli</taxon>
        <taxon>Bacillales</taxon>
        <taxon>Anoxybacillaceae</taxon>
        <taxon>Geobacillus</taxon>
        <taxon>Geobacillus thermoleovorans group</taxon>
    </lineage>
</organism>